<reference key="1">
    <citation type="journal article" date="2001" name="Nature">
        <title>Genome sequence of enterohaemorrhagic Escherichia coli O157:H7.</title>
        <authorList>
            <person name="Perna N.T."/>
            <person name="Plunkett G. III"/>
            <person name="Burland V."/>
            <person name="Mau B."/>
            <person name="Glasner J.D."/>
            <person name="Rose D.J."/>
            <person name="Mayhew G.F."/>
            <person name="Evans P.S."/>
            <person name="Gregor J."/>
            <person name="Kirkpatrick H.A."/>
            <person name="Posfai G."/>
            <person name="Hackett J."/>
            <person name="Klink S."/>
            <person name="Boutin A."/>
            <person name="Shao Y."/>
            <person name="Miller L."/>
            <person name="Grotbeck E.J."/>
            <person name="Davis N.W."/>
            <person name="Lim A."/>
            <person name="Dimalanta E.T."/>
            <person name="Potamousis K."/>
            <person name="Apodaca J."/>
            <person name="Anantharaman T.S."/>
            <person name="Lin J."/>
            <person name="Yen G."/>
            <person name="Schwartz D.C."/>
            <person name="Welch R.A."/>
            <person name="Blattner F.R."/>
        </authorList>
    </citation>
    <scope>NUCLEOTIDE SEQUENCE [LARGE SCALE GENOMIC DNA]</scope>
    <source>
        <strain>O157:H7 / EDL933 / ATCC 700927 / EHEC</strain>
    </source>
</reference>
<reference key="2">
    <citation type="journal article" date="2001" name="DNA Res.">
        <title>Complete genome sequence of enterohemorrhagic Escherichia coli O157:H7 and genomic comparison with a laboratory strain K-12.</title>
        <authorList>
            <person name="Hayashi T."/>
            <person name="Makino K."/>
            <person name="Ohnishi M."/>
            <person name="Kurokawa K."/>
            <person name="Ishii K."/>
            <person name="Yokoyama K."/>
            <person name="Han C.-G."/>
            <person name="Ohtsubo E."/>
            <person name="Nakayama K."/>
            <person name="Murata T."/>
            <person name="Tanaka M."/>
            <person name="Tobe T."/>
            <person name="Iida T."/>
            <person name="Takami H."/>
            <person name="Honda T."/>
            <person name="Sasakawa C."/>
            <person name="Ogasawara N."/>
            <person name="Yasunaga T."/>
            <person name="Kuhara S."/>
            <person name="Shiba T."/>
            <person name="Hattori M."/>
            <person name="Shinagawa H."/>
        </authorList>
    </citation>
    <scope>NUCLEOTIDE SEQUENCE [LARGE SCALE GENOMIC DNA]</scope>
    <source>
        <strain>O157:H7 / Sakai / RIMD 0509952 / EHEC</strain>
    </source>
</reference>
<accession>P0A9V7</accession>
<accession>P37668</accession>
<name>YIAG_ECO57</name>
<feature type="chain" id="PRO_0000149767" description="Uncharacterized HTH-type transcriptional regulator YiaG">
    <location>
        <begin position="1"/>
        <end position="96"/>
    </location>
</feature>
<feature type="domain" description="HTH cro/C1-type" evidence="1">
    <location>
        <begin position="38"/>
        <end position="91"/>
    </location>
</feature>
<feature type="DNA-binding region" description="H-T-H motif" evidence="1">
    <location>
        <begin position="49"/>
        <end position="68"/>
    </location>
</feature>
<organism>
    <name type="scientific">Escherichia coli O157:H7</name>
    <dbReference type="NCBI Taxonomy" id="83334"/>
    <lineage>
        <taxon>Bacteria</taxon>
        <taxon>Pseudomonadati</taxon>
        <taxon>Pseudomonadota</taxon>
        <taxon>Gammaproteobacteria</taxon>
        <taxon>Enterobacterales</taxon>
        <taxon>Enterobacteriaceae</taxon>
        <taxon>Escherichia</taxon>
    </lineage>
</organism>
<gene>
    <name type="primary">yiaG</name>
    <name type="ordered locus">Z4980</name>
    <name type="ordered locus">ECs4440</name>
</gene>
<keyword id="KW-0238">DNA-binding</keyword>
<keyword id="KW-1185">Reference proteome</keyword>
<keyword id="KW-0804">Transcription</keyword>
<keyword id="KW-0805">Transcription regulation</keyword>
<proteinExistence type="predicted"/>
<protein>
    <recommendedName>
        <fullName>Uncharacterized HTH-type transcriptional regulator YiaG</fullName>
    </recommendedName>
</protein>
<dbReference type="EMBL" id="AE005174">
    <property type="protein sequence ID" value="AAG58704.1"/>
    <property type="molecule type" value="Genomic_DNA"/>
</dbReference>
<dbReference type="EMBL" id="BA000007">
    <property type="protein sequence ID" value="BAB37863.1"/>
    <property type="molecule type" value="Genomic_DNA"/>
</dbReference>
<dbReference type="PIR" id="D86030">
    <property type="entry name" value="D86030"/>
</dbReference>
<dbReference type="PIR" id="H91183">
    <property type="entry name" value="H91183"/>
</dbReference>
<dbReference type="RefSeq" id="NP_312467.1">
    <property type="nucleotide sequence ID" value="NC_002695.1"/>
</dbReference>
<dbReference type="RefSeq" id="WP_000455798.1">
    <property type="nucleotide sequence ID" value="NZ_VOAI01000004.1"/>
</dbReference>
<dbReference type="SMR" id="P0A9V7"/>
<dbReference type="STRING" id="155864.Z4980"/>
<dbReference type="GeneID" id="915652"/>
<dbReference type="KEGG" id="ece:Z4980"/>
<dbReference type="KEGG" id="ecs:ECs_4440"/>
<dbReference type="PATRIC" id="fig|386585.9.peg.4647"/>
<dbReference type="eggNOG" id="COG2944">
    <property type="taxonomic scope" value="Bacteria"/>
</dbReference>
<dbReference type="HOGENOM" id="CLU_144725_2_0_6"/>
<dbReference type="OMA" id="MAMPEPQ"/>
<dbReference type="Proteomes" id="UP000000558">
    <property type="component" value="Chromosome"/>
</dbReference>
<dbReference type="Proteomes" id="UP000002519">
    <property type="component" value="Chromosome"/>
</dbReference>
<dbReference type="GO" id="GO:0003677">
    <property type="term" value="F:DNA binding"/>
    <property type="evidence" value="ECO:0007669"/>
    <property type="project" value="UniProtKB-KW"/>
</dbReference>
<dbReference type="CDD" id="cd00093">
    <property type="entry name" value="HTH_XRE"/>
    <property type="match status" value="1"/>
</dbReference>
<dbReference type="Gene3D" id="1.10.260.40">
    <property type="entry name" value="lambda repressor-like DNA-binding domains"/>
    <property type="match status" value="1"/>
</dbReference>
<dbReference type="InterPro" id="IPR001387">
    <property type="entry name" value="Cro/C1-type_HTH"/>
</dbReference>
<dbReference type="InterPro" id="IPR052359">
    <property type="entry name" value="HTH-type_reg/antitoxin"/>
</dbReference>
<dbReference type="InterPro" id="IPR010982">
    <property type="entry name" value="Lambda_DNA-bd_dom_sf"/>
</dbReference>
<dbReference type="NCBIfam" id="NF007481">
    <property type="entry name" value="PRK10072.1"/>
    <property type="match status" value="1"/>
</dbReference>
<dbReference type="PANTHER" id="PTHR36511">
    <property type="entry name" value="MERR FAMILY BACTERIAL REGULATORY PROTEIN"/>
    <property type="match status" value="1"/>
</dbReference>
<dbReference type="PANTHER" id="PTHR36511:SF6">
    <property type="entry name" value="TRANSCRIPTIONAL REGULATOR"/>
    <property type="match status" value="1"/>
</dbReference>
<dbReference type="Pfam" id="PF01381">
    <property type="entry name" value="HTH_3"/>
    <property type="match status" value="1"/>
</dbReference>
<dbReference type="SMART" id="SM00530">
    <property type="entry name" value="HTH_XRE"/>
    <property type="match status" value="1"/>
</dbReference>
<dbReference type="SUPFAM" id="SSF47413">
    <property type="entry name" value="lambda repressor-like DNA-binding domains"/>
    <property type="match status" value="1"/>
</dbReference>
<dbReference type="PROSITE" id="PS50943">
    <property type="entry name" value="HTH_CROC1"/>
    <property type="match status" value="1"/>
</dbReference>
<sequence length="96" mass="11033">MEYKDPMHELLSSLEQIVFKDETQKITLTHRTTSCTEIEQLRKGTGLKIDDFARVLGVSVAMVKEWESRRVKPSSAELKLMRLIQANPALSKQLME</sequence>
<evidence type="ECO:0000255" key="1">
    <source>
        <dbReference type="PROSITE-ProRule" id="PRU00257"/>
    </source>
</evidence>